<name>RBFA_ACTPJ</name>
<organism>
    <name type="scientific">Actinobacillus pleuropneumoniae serotype 3 (strain JL03)</name>
    <dbReference type="NCBI Taxonomy" id="434271"/>
    <lineage>
        <taxon>Bacteria</taxon>
        <taxon>Pseudomonadati</taxon>
        <taxon>Pseudomonadota</taxon>
        <taxon>Gammaproteobacteria</taxon>
        <taxon>Pasteurellales</taxon>
        <taxon>Pasteurellaceae</taxon>
        <taxon>Actinobacillus</taxon>
    </lineage>
</organism>
<comment type="function">
    <text evidence="1">One of several proteins that assist in the late maturation steps of the functional core of the 30S ribosomal subunit. Associates with free 30S ribosomal subunits (but not with 30S subunits that are part of 70S ribosomes or polysomes). Required for efficient processing of 16S rRNA. May interact with the 5'-terminal helix region of 16S rRNA.</text>
</comment>
<comment type="subunit">
    <text evidence="1">Monomer. Binds 30S ribosomal subunits, but not 50S ribosomal subunits or 70S ribosomes.</text>
</comment>
<comment type="subcellular location">
    <subcellularLocation>
        <location evidence="1">Cytoplasm</location>
    </subcellularLocation>
</comment>
<comment type="similarity">
    <text evidence="1">Belongs to the RbfA family.</text>
</comment>
<evidence type="ECO:0000255" key="1">
    <source>
        <dbReference type="HAMAP-Rule" id="MF_00003"/>
    </source>
</evidence>
<gene>
    <name evidence="1" type="primary">rbfA</name>
    <name type="ordered locus">APJL_0631</name>
</gene>
<proteinExistence type="inferred from homology"/>
<keyword id="KW-0963">Cytoplasm</keyword>
<keyword id="KW-0690">Ribosome biogenesis</keyword>
<accession>B0BNR6</accession>
<protein>
    <recommendedName>
        <fullName evidence="1">Ribosome-binding factor A</fullName>
    </recommendedName>
</protein>
<feature type="chain" id="PRO_1000088853" description="Ribosome-binding factor A">
    <location>
        <begin position="1"/>
        <end position="127"/>
    </location>
</feature>
<sequence length="127" mass="14677">MSREFKRSDRVAQELQKEIAVILQREVKDPRIGMVTVSDVEVSRDLAYAKIFVTFLFDNDQSVIEQGMKGLEKASPYIRSLVGKAMRLRIVPELRFIYDQSLVEGMRMSNLVSNVIKNDEAKHKEEE</sequence>
<dbReference type="EMBL" id="CP000687">
    <property type="protein sequence ID" value="ABY69201.1"/>
    <property type="molecule type" value="Genomic_DNA"/>
</dbReference>
<dbReference type="RefSeq" id="WP_005596920.1">
    <property type="nucleotide sequence ID" value="NC_010278.1"/>
</dbReference>
<dbReference type="SMR" id="B0BNR6"/>
<dbReference type="GeneID" id="48598824"/>
<dbReference type="KEGG" id="apj:APJL_0631"/>
<dbReference type="HOGENOM" id="CLU_089475_5_0_6"/>
<dbReference type="Proteomes" id="UP000008547">
    <property type="component" value="Chromosome"/>
</dbReference>
<dbReference type="GO" id="GO:0005829">
    <property type="term" value="C:cytosol"/>
    <property type="evidence" value="ECO:0007669"/>
    <property type="project" value="TreeGrafter"/>
</dbReference>
<dbReference type="GO" id="GO:0043024">
    <property type="term" value="F:ribosomal small subunit binding"/>
    <property type="evidence" value="ECO:0007669"/>
    <property type="project" value="TreeGrafter"/>
</dbReference>
<dbReference type="GO" id="GO:0030490">
    <property type="term" value="P:maturation of SSU-rRNA"/>
    <property type="evidence" value="ECO:0007669"/>
    <property type="project" value="UniProtKB-UniRule"/>
</dbReference>
<dbReference type="FunFam" id="3.30.300.20:FF:000007">
    <property type="entry name" value="Ribosome-binding factor A"/>
    <property type="match status" value="1"/>
</dbReference>
<dbReference type="Gene3D" id="3.30.300.20">
    <property type="match status" value="1"/>
</dbReference>
<dbReference type="HAMAP" id="MF_00003">
    <property type="entry name" value="RbfA"/>
    <property type="match status" value="1"/>
</dbReference>
<dbReference type="InterPro" id="IPR015946">
    <property type="entry name" value="KH_dom-like_a/b"/>
</dbReference>
<dbReference type="InterPro" id="IPR000238">
    <property type="entry name" value="RbfA"/>
</dbReference>
<dbReference type="InterPro" id="IPR023799">
    <property type="entry name" value="RbfA_dom_sf"/>
</dbReference>
<dbReference type="InterPro" id="IPR020053">
    <property type="entry name" value="Ribosome-bd_factorA_CS"/>
</dbReference>
<dbReference type="NCBIfam" id="TIGR00082">
    <property type="entry name" value="rbfA"/>
    <property type="match status" value="1"/>
</dbReference>
<dbReference type="PANTHER" id="PTHR33515">
    <property type="entry name" value="RIBOSOME-BINDING FACTOR A, CHLOROPLASTIC-RELATED"/>
    <property type="match status" value="1"/>
</dbReference>
<dbReference type="PANTHER" id="PTHR33515:SF1">
    <property type="entry name" value="RIBOSOME-BINDING FACTOR A, CHLOROPLASTIC-RELATED"/>
    <property type="match status" value="1"/>
</dbReference>
<dbReference type="Pfam" id="PF02033">
    <property type="entry name" value="RBFA"/>
    <property type="match status" value="1"/>
</dbReference>
<dbReference type="SUPFAM" id="SSF89919">
    <property type="entry name" value="Ribosome-binding factor A, RbfA"/>
    <property type="match status" value="1"/>
</dbReference>
<dbReference type="PROSITE" id="PS01319">
    <property type="entry name" value="RBFA"/>
    <property type="match status" value="1"/>
</dbReference>
<reference key="1">
    <citation type="journal article" date="2008" name="PLoS ONE">
        <title>Genome biology of Actinobacillus pleuropneumoniae JL03, an isolate of serotype 3 prevalent in China.</title>
        <authorList>
            <person name="Xu Z."/>
            <person name="Zhou Y."/>
            <person name="Li L."/>
            <person name="Zhou R."/>
            <person name="Xiao S."/>
            <person name="Wan Y."/>
            <person name="Zhang S."/>
            <person name="Wang K."/>
            <person name="Li W."/>
            <person name="Li L."/>
            <person name="Jin H."/>
            <person name="Kang M."/>
            <person name="Dalai B."/>
            <person name="Li T."/>
            <person name="Liu L."/>
            <person name="Cheng Y."/>
            <person name="Zhang L."/>
            <person name="Xu T."/>
            <person name="Zheng H."/>
            <person name="Pu S."/>
            <person name="Wang B."/>
            <person name="Gu W."/>
            <person name="Zhang X.L."/>
            <person name="Zhu G.-F."/>
            <person name="Wang S."/>
            <person name="Zhao G.-P."/>
            <person name="Chen H."/>
        </authorList>
    </citation>
    <scope>NUCLEOTIDE SEQUENCE [LARGE SCALE GENOMIC DNA]</scope>
    <source>
        <strain>JL03</strain>
    </source>
</reference>